<reference key="1">
    <citation type="journal article" date="2004" name="Proc. Natl. Acad. Sci. U.S.A.">
        <title>The louse-borne human pathogen Bartonella quintana is a genomic derivative of the zoonotic agent Bartonella henselae.</title>
        <authorList>
            <person name="Alsmark U.C.M."/>
            <person name="Frank A.C."/>
            <person name="Karlberg E.O."/>
            <person name="Legault B.-A."/>
            <person name="Ardell D.H."/>
            <person name="Canbaeck B."/>
            <person name="Eriksson A.-S."/>
            <person name="Naeslund A.K."/>
            <person name="Handley S.A."/>
            <person name="Huvet M."/>
            <person name="La Scola B."/>
            <person name="Holmberg M."/>
            <person name="Andersson S.G.E."/>
        </authorList>
    </citation>
    <scope>NUCLEOTIDE SEQUENCE [LARGE SCALE GENOMIC DNA]</scope>
    <source>
        <strain>Toulouse</strain>
    </source>
</reference>
<proteinExistence type="inferred from homology"/>
<evidence type="ECO:0000255" key="1">
    <source>
        <dbReference type="HAMAP-Rule" id="MF_01554"/>
    </source>
</evidence>
<keyword id="KW-0413">Isomerase</keyword>
<keyword id="KW-0460">Magnesium</keyword>
<keyword id="KW-0479">Metal-binding</keyword>
<keyword id="KW-0597">Phosphoprotein</keyword>
<organism>
    <name type="scientific">Bartonella quintana (strain Toulouse)</name>
    <name type="common">Rochalimaea quintana</name>
    <dbReference type="NCBI Taxonomy" id="283165"/>
    <lineage>
        <taxon>Bacteria</taxon>
        <taxon>Pseudomonadati</taxon>
        <taxon>Pseudomonadota</taxon>
        <taxon>Alphaproteobacteria</taxon>
        <taxon>Hyphomicrobiales</taxon>
        <taxon>Bartonellaceae</taxon>
        <taxon>Bartonella</taxon>
    </lineage>
</organism>
<feature type="chain" id="PRO_0000147849" description="Phosphoglucosamine mutase">
    <location>
        <begin position="1"/>
        <end position="459"/>
    </location>
</feature>
<feature type="active site" description="Phosphoserine intermediate" evidence="1">
    <location>
        <position position="102"/>
    </location>
</feature>
<feature type="binding site" description="via phosphate group" evidence="1">
    <location>
        <position position="102"/>
    </location>
    <ligand>
        <name>Mg(2+)</name>
        <dbReference type="ChEBI" id="CHEBI:18420"/>
    </ligand>
</feature>
<feature type="binding site" evidence="1">
    <location>
        <position position="243"/>
    </location>
    <ligand>
        <name>Mg(2+)</name>
        <dbReference type="ChEBI" id="CHEBI:18420"/>
    </ligand>
</feature>
<feature type="binding site" evidence="1">
    <location>
        <position position="245"/>
    </location>
    <ligand>
        <name>Mg(2+)</name>
        <dbReference type="ChEBI" id="CHEBI:18420"/>
    </ligand>
</feature>
<feature type="binding site" evidence="1">
    <location>
        <position position="247"/>
    </location>
    <ligand>
        <name>Mg(2+)</name>
        <dbReference type="ChEBI" id="CHEBI:18420"/>
    </ligand>
</feature>
<feature type="modified residue" description="Phosphoserine" evidence="1">
    <location>
        <position position="102"/>
    </location>
</feature>
<protein>
    <recommendedName>
        <fullName evidence="1">Phosphoglucosamine mutase</fullName>
        <ecNumber evidence="1">5.4.2.10</ecNumber>
    </recommendedName>
</protein>
<accession>Q6FYQ7</accession>
<sequence>MAQKYFGTDGIRGKANVFPMTPDFAMKVGMAVGVLFRSQRQSRRVVIGKDTRLSGYMLENALVSGFTAAGMEAFLLGPVPTPAVAMLCRSLRADLGVMISASHNPFYDNGIKLFGPDGFKLSDEIEKKIEQLIDTDLSKSLASCAEIGYAKRVEGDIYRYIEYAKRTLPRDVRLDALRIVVDCANGAAYKAAPRALWELGAEVFAINDAPNGTNINQKCGSTDLASLKQKVHEVRADVGIALDGDGDRVLIVDEKAQTVDGDQLIAVIAEHWHKTGRLQGNGVVTTIMSNLGLERFLNRKGLELVRTNVGDRYVVDAMRQKGYNIGGEASGHIVLSDFGTTGDGLVAALQILACMQESQSSMSHLCKRFEPVPQILKNVTIKNKNVLKKNQVKTAIDQATQRLGNEARLVIRASGTEPVIRIMGEGDEREVLDAVVAEMVDVIAHHDALSKVGASLEGS</sequence>
<dbReference type="EC" id="5.4.2.10" evidence="1"/>
<dbReference type="EMBL" id="BX897700">
    <property type="protein sequence ID" value="CAF26633.1"/>
    <property type="molecule type" value="Genomic_DNA"/>
</dbReference>
<dbReference type="RefSeq" id="WP_011179808.1">
    <property type="nucleotide sequence ID" value="NC_005955.1"/>
</dbReference>
<dbReference type="SMR" id="Q6FYQ7"/>
<dbReference type="KEGG" id="bqu:BQ11740"/>
<dbReference type="eggNOG" id="COG1109">
    <property type="taxonomic scope" value="Bacteria"/>
</dbReference>
<dbReference type="HOGENOM" id="CLU_016950_7_0_5"/>
<dbReference type="OrthoDB" id="9803322at2"/>
<dbReference type="Proteomes" id="UP000000597">
    <property type="component" value="Chromosome"/>
</dbReference>
<dbReference type="GO" id="GO:0005829">
    <property type="term" value="C:cytosol"/>
    <property type="evidence" value="ECO:0007669"/>
    <property type="project" value="TreeGrafter"/>
</dbReference>
<dbReference type="GO" id="GO:0000287">
    <property type="term" value="F:magnesium ion binding"/>
    <property type="evidence" value="ECO:0007669"/>
    <property type="project" value="UniProtKB-UniRule"/>
</dbReference>
<dbReference type="GO" id="GO:0008966">
    <property type="term" value="F:phosphoglucosamine mutase activity"/>
    <property type="evidence" value="ECO:0007669"/>
    <property type="project" value="UniProtKB-UniRule"/>
</dbReference>
<dbReference type="GO" id="GO:0004615">
    <property type="term" value="F:phosphomannomutase activity"/>
    <property type="evidence" value="ECO:0007669"/>
    <property type="project" value="TreeGrafter"/>
</dbReference>
<dbReference type="GO" id="GO:0005975">
    <property type="term" value="P:carbohydrate metabolic process"/>
    <property type="evidence" value="ECO:0007669"/>
    <property type="project" value="InterPro"/>
</dbReference>
<dbReference type="GO" id="GO:0009252">
    <property type="term" value="P:peptidoglycan biosynthetic process"/>
    <property type="evidence" value="ECO:0007669"/>
    <property type="project" value="TreeGrafter"/>
</dbReference>
<dbReference type="GO" id="GO:0006048">
    <property type="term" value="P:UDP-N-acetylglucosamine biosynthetic process"/>
    <property type="evidence" value="ECO:0007669"/>
    <property type="project" value="TreeGrafter"/>
</dbReference>
<dbReference type="CDD" id="cd05802">
    <property type="entry name" value="GlmM"/>
    <property type="match status" value="1"/>
</dbReference>
<dbReference type="FunFam" id="3.40.120.10:FF:000001">
    <property type="entry name" value="Phosphoglucosamine mutase"/>
    <property type="match status" value="1"/>
</dbReference>
<dbReference type="FunFam" id="3.40.120.10:FF:000002">
    <property type="entry name" value="Phosphoglucosamine mutase"/>
    <property type="match status" value="1"/>
</dbReference>
<dbReference type="Gene3D" id="3.40.120.10">
    <property type="entry name" value="Alpha-D-Glucose-1,6-Bisphosphate, subunit A, domain 3"/>
    <property type="match status" value="3"/>
</dbReference>
<dbReference type="Gene3D" id="3.30.310.50">
    <property type="entry name" value="Alpha-D-phosphohexomutase, C-terminal domain"/>
    <property type="match status" value="1"/>
</dbReference>
<dbReference type="HAMAP" id="MF_01554_B">
    <property type="entry name" value="GlmM_B"/>
    <property type="match status" value="1"/>
</dbReference>
<dbReference type="InterPro" id="IPR005844">
    <property type="entry name" value="A-D-PHexomutase_a/b/a-I"/>
</dbReference>
<dbReference type="InterPro" id="IPR016055">
    <property type="entry name" value="A-D-PHexomutase_a/b/a-I/II/III"/>
</dbReference>
<dbReference type="InterPro" id="IPR005845">
    <property type="entry name" value="A-D-PHexomutase_a/b/a-II"/>
</dbReference>
<dbReference type="InterPro" id="IPR005846">
    <property type="entry name" value="A-D-PHexomutase_a/b/a-III"/>
</dbReference>
<dbReference type="InterPro" id="IPR005843">
    <property type="entry name" value="A-D-PHexomutase_C"/>
</dbReference>
<dbReference type="InterPro" id="IPR036900">
    <property type="entry name" value="A-D-PHexomutase_C_sf"/>
</dbReference>
<dbReference type="InterPro" id="IPR016066">
    <property type="entry name" value="A-D-PHexomutase_CS"/>
</dbReference>
<dbReference type="InterPro" id="IPR005841">
    <property type="entry name" value="Alpha-D-phosphohexomutase_SF"/>
</dbReference>
<dbReference type="InterPro" id="IPR006352">
    <property type="entry name" value="GlmM_bact"/>
</dbReference>
<dbReference type="InterPro" id="IPR050060">
    <property type="entry name" value="Phosphoglucosamine_mutase"/>
</dbReference>
<dbReference type="NCBIfam" id="TIGR01455">
    <property type="entry name" value="glmM"/>
    <property type="match status" value="1"/>
</dbReference>
<dbReference type="NCBIfam" id="NF008139">
    <property type="entry name" value="PRK10887.1"/>
    <property type="match status" value="1"/>
</dbReference>
<dbReference type="PANTHER" id="PTHR42946:SF1">
    <property type="entry name" value="PHOSPHOGLUCOMUTASE (ALPHA-D-GLUCOSE-1,6-BISPHOSPHATE-DEPENDENT)"/>
    <property type="match status" value="1"/>
</dbReference>
<dbReference type="PANTHER" id="PTHR42946">
    <property type="entry name" value="PHOSPHOHEXOSE MUTASE"/>
    <property type="match status" value="1"/>
</dbReference>
<dbReference type="Pfam" id="PF02878">
    <property type="entry name" value="PGM_PMM_I"/>
    <property type="match status" value="1"/>
</dbReference>
<dbReference type="Pfam" id="PF02879">
    <property type="entry name" value="PGM_PMM_II"/>
    <property type="match status" value="1"/>
</dbReference>
<dbReference type="Pfam" id="PF02880">
    <property type="entry name" value="PGM_PMM_III"/>
    <property type="match status" value="1"/>
</dbReference>
<dbReference type="Pfam" id="PF00408">
    <property type="entry name" value="PGM_PMM_IV"/>
    <property type="match status" value="1"/>
</dbReference>
<dbReference type="PRINTS" id="PR00509">
    <property type="entry name" value="PGMPMM"/>
</dbReference>
<dbReference type="SUPFAM" id="SSF55957">
    <property type="entry name" value="Phosphoglucomutase, C-terminal domain"/>
    <property type="match status" value="1"/>
</dbReference>
<dbReference type="SUPFAM" id="SSF53738">
    <property type="entry name" value="Phosphoglucomutase, first 3 domains"/>
    <property type="match status" value="3"/>
</dbReference>
<dbReference type="PROSITE" id="PS00710">
    <property type="entry name" value="PGM_PMM"/>
    <property type="match status" value="1"/>
</dbReference>
<gene>
    <name evidence="1" type="primary">glmM</name>
    <name type="ordered locus">BQ11740</name>
</gene>
<name>GLMM_BARQU</name>
<comment type="function">
    <text evidence="1">Catalyzes the conversion of glucosamine-6-phosphate to glucosamine-1-phosphate.</text>
</comment>
<comment type="catalytic activity">
    <reaction evidence="1">
        <text>alpha-D-glucosamine 1-phosphate = D-glucosamine 6-phosphate</text>
        <dbReference type="Rhea" id="RHEA:23424"/>
        <dbReference type="ChEBI" id="CHEBI:58516"/>
        <dbReference type="ChEBI" id="CHEBI:58725"/>
        <dbReference type="EC" id="5.4.2.10"/>
    </reaction>
</comment>
<comment type="cofactor">
    <cofactor evidence="1">
        <name>Mg(2+)</name>
        <dbReference type="ChEBI" id="CHEBI:18420"/>
    </cofactor>
    <text evidence="1">Binds 1 Mg(2+) ion per subunit.</text>
</comment>
<comment type="PTM">
    <text evidence="1">Activated by phosphorylation.</text>
</comment>
<comment type="similarity">
    <text evidence="1">Belongs to the phosphohexose mutase family.</text>
</comment>